<evidence type="ECO:0000255" key="1">
    <source>
        <dbReference type="HAMAP-Rule" id="MF_01366"/>
    </source>
</evidence>
<evidence type="ECO:0000269" key="2">
    <source>
    </source>
</evidence>
<evidence type="ECO:0000305" key="3"/>
<evidence type="ECO:0007829" key="4">
    <source>
        <dbReference type="PDB" id="5O60"/>
    </source>
</evidence>
<evidence type="ECO:0007829" key="5">
    <source>
        <dbReference type="PDB" id="5XYM"/>
    </source>
</evidence>
<evidence type="ECO:0007829" key="6">
    <source>
        <dbReference type="PDB" id="5ZET"/>
    </source>
</evidence>
<keyword id="KW-0002">3D-structure</keyword>
<keyword id="KW-1185">Reference proteome</keyword>
<keyword id="KW-0687">Ribonucleoprotein</keyword>
<keyword id="KW-0689">Ribosomal protein</keyword>
<gene>
    <name evidence="1" type="primary">rplM</name>
    <name type="ordered locus">MSMEG_1556</name>
    <name type="ordered locus">MSMEI_1519</name>
</gene>
<organism>
    <name type="scientific">Mycolicibacterium smegmatis (strain ATCC 700084 / mc(2)155)</name>
    <name type="common">Mycobacterium smegmatis</name>
    <dbReference type="NCBI Taxonomy" id="246196"/>
    <lineage>
        <taxon>Bacteria</taxon>
        <taxon>Bacillati</taxon>
        <taxon>Actinomycetota</taxon>
        <taxon>Actinomycetes</taxon>
        <taxon>Mycobacteriales</taxon>
        <taxon>Mycobacteriaceae</taxon>
        <taxon>Mycolicibacterium</taxon>
    </lineage>
</organism>
<sequence length="147" mass="16119">MPTYTPKAGDTTRSWYVIDASDVVLGRLASAAATLLRGKHKPTFTPNVDGGDFVIVINADKIAVSGDKLTKKFAYRHSGYPGGLRKRTIGELLEKHPTRVVENAIIGMLPHNKLGRQIQKKLKVYAGPDHPHAAQQPIPFEIKQVAQ</sequence>
<proteinExistence type="evidence at protein level"/>
<comment type="function">
    <text evidence="1">This protein is one of the early assembly proteins of the 50S ribosomal subunit, although it is not seen to bind rRNA by itself. It is important during the early stages of 50S assembly.</text>
</comment>
<comment type="subunit">
    <text evidence="1">Part of the 50S ribosomal subunit.</text>
</comment>
<comment type="similarity">
    <text evidence="1">Belongs to the universal ribosomal protein uL13 family.</text>
</comment>
<reference key="1">
    <citation type="submission" date="2006-10" db="EMBL/GenBank/DDBJ databases">
        <authorList>
            <person name="Fleischmann R.D."/>
            <person name="Dodson R.J."/>
            <person name="Haft D.H."/>
            <person name="Merkel J.S."/>
            <person name="Nelson W.C."/>
            <person name="Fraser C.M."/>
        </authorList>
    </citation>
    <scope>NUCLEOTIDE SEQUENCE [LARGE SCALE GENOMIC DNA]</scope>
    <source>
        <strain>ATCC 700084 / mc(2)155</strain>
    </source>
</reference>
<reference key="2">
    <citation type="journal article" date="2007" name="Genome Biol.">
        <title>Interrupted coding sequences in Mycobacterium smegmatis: authentic mutations or sequencing errors?</title>
        <authorList>
            <person name="Deshayes C."/>
            <person name="Perrodou E."/>
            <person name="Gallien S."/>
            <person name="Euphrasie D."/>
            <person name="Schaeffer C."/>
            <person name="Van-Dorsselaer A."/>
            <person name="Poch O."/>
            <person name="Lecompte O."/>
            <person name="Reyrat J.-M."/>
        </authorList>
    </citation>
    <scope>NUCLEOTIDE SEQUENCE [LARGE SCALE GENOMIC DNA]</scope>
    <source>
        <strain>ATCC 700084 / mc(2)155</strain>
    </source>
</reference>
<reference key="3">
    <citation type="journal article" date="2009" name="Genome Res.">
        <title>Ortho-proteogenomics: multiple proteomes investigation through orthology and a new MS-based protocol.</title>
        <authorList>
            <person name="Gallien S."/>
            <person name="Perrodou E."/>
            <person name="Carapito C."/>
            <person name="Deshayes C."/>
            <person name="Reyrat J.-M."/>
            <person name="Van Dorsselaer A."/>
            <person name="Poch O."/>
            <person name="Schaeffer C."/>
            <person name="Lecompte O."/>
        </authorList>
    </citation>
    <scope>NUCLEOTIDE SEQUENCE [LARGE SCALE GENOMIC DNA]</scope>
    <scope>IDENTIFICATION BY MASS SPECTROMETRY [LARGE SCALE ANALYSIS]</scope>
    <scope>CLEAVAGE OF INITIATOR METHIONINE</scope>
    <source>
        <strain>ATCC 700084 / mc(2)155</strain>
    </source>
</reference>
<dbReference type="EMBL" id="CP000480">
    <property type="protein sequence ID" value="ABK73633.1"/>
    <property type="molecule type" value="Genomic_DNA"/>
</dbReference>
<dbReference type="EMBL" id="CP001663">
    <property type="protein sequence ID" value="AFP37992.1"/>
    <property type="molecule type" value="Genomic_DNA"/>
</dbReference>
<dbReference type="RefSeq" id="WP_003892944.1">
    <property type="nucleotide sequence ID" value="NZ_SIJM01000016.1"/>
</dbReference>
<dbReference type="RefSeq" id="YP_885936.1">
    <property type="nucleotide sequence ID" value="NC_008596.1"/>
</dbReference>
<dbReference type="PDB" id="5O60">
    <property type="method" value="EM"/>
    <property type="resolution" value="3.20 A"/>
    <property type="chains" value="K=1-147"/>
</dbReference>
<dbReference type="PDB" id="5O61">
    <property type="method" value="EM"/>
    <property type="resolution" value="3.31 A"/>
    <property type="chains" value="K=1-147"/>
</dbReference>
<dbReference type="PDB" id="5XYM">
    <property type="method" value="EM"/>
    <property type="resolution" value="3.08 A"/>
    <property type="chains" value="J=1-147"/>
</dbReference>
<dbReference type="PDB" id="5ZEB">
    <property type="method" value="EM"/>
    <property type="resolution" value="3.40 A"/>
    <property type="chains" value="K=1-147"/>
</dbReference>
<dbReference type="PDB" id="5ZEP">
    <property type="method" value="EM"/>
    <property type="resolution" value="3.40 A"/>
    <property type="chains" value="K=1-147"/>
</dbReference>
<dbReference type="PDB" id="5ZET">
    <property type="method" value="EM"/>
    <property type="resolution" value="3.20 A"/>
    <property type="chains" value="K=1-147"/>
</dbReference>
<dbReference type="PDB" id="6DZI">
    <property type="method" value="EM"/>
    <property type="resolution" value="3.46 A"/>
    <property type="chains" value="K=2-147"/>
</dbReference>
<dbReference type="PDB" id="6DZP">
    <property type="method" value="EM"/>
    <property type="resolution" value="3.42 A"/>
    <property type="chains" value="K=2-147"/>
</dbReference>
<dbReference type="PDB" id="7S0S">
    <property type="method" value="EM"/>
    <property type="resolution" value="3.05 A"/>
    <property type="chains" value="L=2-147"/>
</dbReference>
<dbReference type="PDB" id="7XAM">
    <property type="method" value="EM"/>
    <property type="resolution" value="2.80 A"/>
    <property type="chains" value="K=1-147"/>
</dbReference>
<dbReference type="PDB" id="7Y41">
    <property type="method" value="EM"/>
    <property type="resolution" value="4.10 A"/>
    <property type="chains" value="K=1-147"/>
</dbReference>
<dbReference type="PDB" id="8FR8">
    <property type="method" value="EM"/>
    <property type="resolution" value="2.76 A"/>
    <property type="chains" value="T=2-147"/>
</dbReference>
<dbReference type="PDB" id="8KAB">
    <property type="method" value="EM"/>
    <property type="resolution" value="3.30 A"/>
    <property type="chains" value="K=1-147"/>
</dbReference>
<dbReference type="PDB" id="8V9J">
    <property type="method" value="EM"/>
    <property type="resolution" value="3.10 A"/>
    <property type="chains" value="L=1-147"/>
</dbReference>
<dbReference type="PDB" id="8V9K">
    <property type="method" value="EM"/>
    <property type="resolution" value="3.10 A"/>
    <property type="chains" value="L=1-147"/>
</dbReference>
<dbReference type="PDB" id="8V9L">
    <property type="method" value="EM"/>
    <property type="resolution" value="3.00 A"/>
    <property type="chains" value="L=1-147"/>
</dbReference>
<dbReference type="PDB" id="8VIO">
    <property type="method" value="EM"/>
    <property type="resolution" value="3.26 A"/>
    <property type="chains" value="K=1-147"/>
</dbReference>
<dbReference type="PDB" id="8VK0">
    <property type="method" value="EM"/>
    <property type="resolution" value="3.14 A"/>
    <property type="chains" value="K=1-147"/>
</dbReference>
<dbReference type="PDB" id="8VK7">
    <property type="method" value="EM"/>
    <property type="resolution" value="3.09 A"/>
    <property type="chains" value="K=1-147"/>
</dbReference>
<dbReference type="PDB" id="8VKI">
    <property type="method" value="EM"/>
    <property type="resolution" value="2.96 A"/>
    <property type="chains" value="K=1-147"/>
</dbReference>
<dbReference type="PDB" id="8VKW">
    <property type="method" value="EM"/>
    <property type="resolution" value="3.44 A"/>
    <property type="chains" value="K=1-147"/>
</dbReference>
<dbReference type="PDB" id="8VR4">
    <property type="method" value="EM"/>
    <property type="resolution" value="2.80 A"/>
    <property type="chains" value="K=1-147"/>
</dbReference>
<dbReference type="PDB" id="8VR8">
    <property type="method" value="EM"/>
    <property type="resolution" value="3.25 A"/>
    <property type="chains" value="K=1-147"/>
</dbReference>
<dbReference type="PDB" id="8VRL">
    <property type="method" value="EM"/>
    <property type="resolution" value="3.33 A"/>
    <property type="chains" value="K=1-147"/>
</dbReference>
<dbReference type="PDB" id="8WHX">
    <property type="method" value="EM"/>
    <property type="resolution" value="2.80 A"/>
    <property type="chains" value="M=1-147"/>
</dbReference>
<dbReference type="PDB" id="8WHY">
    <property type="method" value="EM"/>
    <property type="resolution" value="2.70 A"/>
    <property type="chains" value="M=1-147"/>
</dbReference>
<dbReference type="PDB" id="8WI7">
    <property type="method" value="EM"/>
    <property type="resolution" value="3.50 A"/>
    <property type="chains" value="M=1-147"/>
</dbReference>
<dbReference type="PDB" id="8WI8">
    <property type="method" value="EM"/>
    <property type="resolution" value="2.70 A"/>
    <property type="chains" value="M=1-147"/>
</dbReference>
<dbReference type="PDB" id="8WIB">
    <property type="method" value="EM"/>
    <property type="resolution" value="3.50 A"/>
    <property type="chains" value="M=1-147"/>
</dbReference>
<dbReference type="PDB" id="8WIC">
    <property type="method" value="EM"/>
    <property type="resolution" value="3.50 A"/>
    <property type="chains" value="M=1-147"/>
</dbReference>
<dbReference type="PDB" id="8XZ3">
    <property type="method" value="EM"/>
    <property type="resolution" value="3.60 A"/>
    <property type="chains" value="K=2-147"/>
</dbReference>
<dbReference type="PDBsum" id="5O60"/>
<dbReference type="PDBsum" id="5O61"/>
<dbReference type="PDBsum" id="5XYM"/>
<dbReference type="PDBsum" id="5ZEB"/>
<dbReference type="PDBsum" id="5ZEP"/>
<dbReference type="PDBsum" id="5ZET"/>
<dbReference type="PDBsum" id="6DZI"/>
<dbReference type="PDBsum" id="6DZP"/>
<dbReference type="PDBsum" id="7S0S"/>
<dbReference type="PDBsum" id="7XAM"/>
<dbReference type="PDBsum" id="7Y41"/>
<dbReference type="PDBsum" id="8FR8"/>
<dbReference type="PDBsum" id="8KAB"/>
<dbReference type="PDBsum" id="8V9J"/>
<dbReference type="PDBsum" id="8V9K"/>
<dbReference type="PDBsum" id="8V9L"/>
<dbReference type="PDBsum" id="8VIO"/>
<dbReference type="PDBsum" id="8VK0"/>
<dbReference type="PDBsum" id="8VK7"/>
<dbReference type="PDBsum" id="8VKI"/>
<dbReference type="PDBsum" id="8VKW"/>
<dbReference type="PDBsum" id="8VR4"/>
<dbReference type="PDBsum" id="8VR8"/>
<dbReference type="PDBsum" id="8VRL"/>
<dbReference type="PDBsum" id="8WHX"/>
<dbReference type="PDBsum" id="8WHY"/>
<dbReference type="PDBsum" id="8WI7"/>
<dbReference type="PDBsum" id="8WI8"/>
<dbReference type="PDBsum" id="8WIB"/>
<dbReference type="PDBsum" id="8WIC"/>
<dbReference type="PDBsum" id="8XZ3"/>
<dbReference type="EMDB" id="EMD-29397"/>
<dbReference type="EMDB" id="EMD-33096"/>
<dbReference type="EMDB" id="EMD-33599"/>
<dbReference type="EMDB" id="EMD-37007"/>
<dbReference type="EMDB" id="EMD-3750"/>
<dbReference type="EMDB" id="EMD-3751"/>
<dbReference type="EMDB" id="EMD-37551"/>
<dbReference type="EMDB" id="EMD-37552"/>
<dbReference type="EMDB" id="EMD-37559"/>
<dbReference type="EMDB" id="EMD-37560"/>
<dbReference type="EMDB" id="EMD-37562"/>
<dbReference type="EMDB" id="EMD-37563"/>
<dbReference type="EMDB" id="EMD-38788"/>
<dbReference type="EMDB" id="EMD-43074"/>
<dbReference type="EMDB" id="EMD-43075"/>
<dbReference type="EMDB" id="EMD-43076"/>
<dbReference type="EMDB" id="EMD-43267"/>
<dbReference type="EMDB" id="EMD-43294"/>
<dbReference type="EMDB" id="EMD-43305"/>
<dbReference type="EMDB" id="EMD-43317"/>
<dbReference type="EMDB" id="EMD-43333"/>
<dbReference type="EMDB" id="EMD-43476"/>
<dbReference type="EMDB" id="EMD-43477"/>
<dbReference type="EMDB" id="EMD-43484"/>
<dbReference type="EMDB" id="EMD-6789"/>
<dbReference type="EMDB" id="EMD-6920"/>
<dbReference type="EMDB" id="EMD-6921"/>
<dbReference type="EMDB" id="EMD-6922"/>
<dbReference type="EMDB" id="EMD-8932"/>
<dbReference type="EMDB" id="EMD-8937"/>
<dbReference type="SMR" id="A0QSP8"/>
<dbReference type="IntAct" id="A0QSP8">
    <property type="interactions" value="2"/>
</dbReference>
<dbReference type="STRING" id="246196.MSMEG_1556"/>
<dbReference type="PaxDb" id="246196-MSMEI_1519"/>
<dbReference type="GeneID" id="93456396"/>
<dbReference type="KEGG" id="msb:LJ00_07775"/>
<dbReference type="KEGG" id="msg:MSMEI_1519"/>
<dbReference type="KEGG" id="msm:MSMEG_1556"/>
<dbReference type="PATRIC" id="fig|246196.19.peg.1542"/>
<dbReference type="eggNOG" id="COG0102">
    <property type="taxonomic scope" value="Bacteria"/>
</dbReference>
<dbReference type="OrthoDB" id="9801330at2"/>
<dbReference type="Proteomes" id="UP000000757">
    <property type="component" value="Chromosome"/>
</dbReference>
<dbReference type="Proteomes" id="UP000006158">
    <property type="component" value="Chromosome"/>
</dbReference>
<dbReference type="GO" id="GO:0022625">
    <property type="term" value="C:cytosolic large ribosomal subunit"/>
    <property type="evidence" value="ECO:0007669"/>
    <property type="project" value="TreeGrafter"/>
</dbReference>
<dbReference type="GO" id="GO:0003729">
    <property type="term" value="F:mRNA binding"/>
    <property type="evidence" value="ECO:0007669"/>
    <property type="project" value="TreeGrafter"/>
</dbReference>
<dbReference type="GO" id="GO:0003735">
    <property type="term" value="F:structural constituent of ribosome"/>
    <property type="evidence" value="ECO:0007669"/>
    <property type="project" value="InterPro"/>
</dbReference>
<dbReference type="GO" id="GO:0017148">
    <property type="term" value="P:negative regulation of translation"/>
    <property type="evidence" value="ECO:0007669"/>
    <property type="project" value="TreeGrafter"/>
</dbReference>
<dbReference type="GO" id="GO:0006412">
    <property type="term" value="P:translation"/>
    <property type="evidence" value="ECO:0007669"/>
    <property type="project" value="UniProtKB-UniRule"/>
</dbReference>
<dbReference type="CDD" id="cd00392">
    <property type="entry name" value="Ribosomal_L13"/>
    <property type="match status" value="1"/>
</dbReference>
<dbReference type="FunFam" id="3.90.1180.10:FF:000001">
    <property type="entry name" value="50S ribosomal protein L13"/>
    <property type="match status" value="1"/>
</dbReference>
<dbReference type="Gene3D" id="3.90.1180.10">
    <property type="entry name" value="Ribosomal protein L13"/>
    <property type="match status" value="1"/>
</dbReference>
<dbReference type="HAMAP" id="MF_01366">
    <property type="entry name" value="Ribosomal_uL13"/>
    <property type="match status" value="1"/>
</dbReference>
<dbReference type="InterPro" id="IPR005822">
    <property type="entry name" value="Ribosomal_uL13"/>
</dbReference>
<dbReference type="InterPro" id="IPR005823">
    <property type="entry name" value="Ribosomal_uL13_bac-type"/>
</dbReference>
<dbReference type="InterPro" id="IPR036899">
    <property type="entry name" value="Ribosomal_uL13_sf"/>
</dbReference>
<dbReference type="NCBIfam" id="TIGR01066">
    <property type="entry name" value="rplM_bact"/>
    <property type="match status" value="1"/>
</dbReference>
<dbReference type="PANTHER" id="PTHR11545:SF2">
    <property type="entry name" value="LARGE RIBOSOMAL SUBUNIT PROTEIN UL13M"/>
    <property type="match status" value="1"/>
</dbReference>
<dbReference type="PANTHER" id="PTHR11545">
    <property type="entry name" value="RIBOSOMAL PROTEIN L13"/>
    <property type="match status" value="1"/>
</dbReference>
<dbReference type="Pfam" id="PF00572">
    <property type="entry name" value="Ribosomal_L13"/>
    <property type="match status" value="1"/>
</dbReference>
<dbReference type="PIRSF" id="PIRSF002181">
    <property type="entry name" value="Ribosomal_L13"/>
    <property type="match status" value="1"/>
</dbReference>
<dbReference type="SUPFAM" id="SSF52161">
    <property type="entry name" value="Ribosomal protein L13"/>
    <property type="match status" value="1"/>
</dbReference>
<protein>
    <recommendedName>
        <fullName evidence="1">Large ribosomal subunit protein uL13</fullName>
    </recommendedName>
    <alternativeName>
        <fullName evidence="3">50S ribosomal protein L13</fullName>
    </alternativeName>
</protein>
<name>RL13_MYCS2</name>
<accession>A0QSP8</accession>
<accession>I7FYE6</accession>
<feature type="initiator methionine" description="Removed" evidence="2">
    <location>
        <position position="1"/>
    </location>
</feature>
<feature type="chain" id="PRO_1000055416" description="Large ribosomal subunit protein uL13">
    <location>
        <begin position="2"/>
        <end position="147"/>
    </location>
</feature>
<feature type="turn" evidence="6">
    <location>
        <begin position="8"/>
        <end position="10"/>
    </location>
</feature>
<feature type="strand" evidence="5">
    <location>
        <begin position="15"/>
        <end position="19"/>
    </location>
</feature>
<feature type="helix" evidence="5">
    <location>
        <begin position="27"/>
        <end position="37"/>
    </location>
</feature>
<feature type="strand" evidence="5">
    <location>
        <begin position="40"/>
        <end position="43"/>
    </location>
</feature>
<feature type="strand" evidence="5">
    <location>
        <begin position="46"/>
        <end position="48"/>
    </location>
</feature>
<feature type="strand" evidence="5">
    <location>
        <begin position="53"/>
        <end position="57"/>
    </location>
</feature>
<feature type="turn" evidence="5">
    <location>
        <begin position="59"/>
        <end position="61"/>
    </location>
</feature>
<feature type="helix" evidence="5">
    <location>
        <begin position="68"/>
        <end position="71"/>
    </location>
</feature>
<feature type="strand" evidence="5">
    <location>
        <begin position="75"/>
        <end position="77"/>
    </location>
</feature>
<feature type="strand" evidence="5">
    <location>
        <begin position="84"/>
        <end position="86"/>
    </location>
</feature>
<feature type="helix" evidence="5">
    <location>
        <begin position="89"/>
        <end position="95"/>
    </location>
</feature>
<feature type="helix" evidence="5">
    <location>
        <begin position="97"/>
        <end position="108"/>
    </location>
</feature>
<feature type="helix" evidence="5">
    <location>
        <begin position="113"/>
        <end position="117"/>
    </location>
</feature>
<feature type="turn" evidence="5">
    <location>
        <begin position="119"/>
        <end position="121"/>
    </location>
</feature>
<feature type="strand" evidence="5">
    <location>
        <begin position="122"/>
        <end position="124"/>
    </location>
</feature>
<feature type="strand" evidence="5">
    <location>
        <begin position="126"/>
        <end position="128"/>
    </location>
</feature>
<feature type="helix" evidence="4">
    <location>
        <begin position="131"/>
        <end position="135"/>
    </location>
</feature>